<comment type="function">
    <text evidence="1">Catalyzes the attachment of isoleucine to tRNA(Ile). As IleRS can inadvertently accommodate and process structurally similar amino acids such as valine, to avoid such errors it has two additional distinct tRNA(Ile)-dependent editing activities. One activity is designated as 'pretransfer' editing and involves the hydrolysis of activated Val-AMP. The other activity is designated 'posttransfer' editing and involves deacylation of mischarged Val-tRNA(Ile).</text>
</comment>
<comment type="catalytic activity">
    <reaction evidence="1">
        <text>tRNA(Ile) + L-isoleucine + ATP = L-isoleucyl-tRNA(Ile) + AMP + diphosphate</text>
        <dbReference type="Rhea" id="RHEA:11060"/>
        <dbReference type="Rhea" id="RHEA-COMP:9666"/>
        <dbReference type="Rhea" id="RHEA-COMP:9695"/>
        <dbReference type="ChEBI" id="CHEBI:30616"/>
        <dbReference type="ChEBI" id="CHEBI:33019"/>
        <dbReference type="ChEBI" id="CHEBI:58045"/>
        <dbReference type="ChEBI" id="CHEBI:78442"/>
        <dbReference type="ChEBI" id="CHEBI:78528"/>
        <dbReference type="ChEBI" id="CHEBI:456215"/>
        <dbReference type="EC" id="6.1.1.5"/>
    </reaction>
</comment>
<comment type="cofactor">
    <cofactor evidence="1">
        <name>Zn(2+)</name>
        <dbReference type="ChEBI" id="CHEBI:29105"/>
    </cofactor>
</comment>
<comment type="subunit">
    <text evidence="1">Monomer.</text>
</comment>
<comment type="subcellular location">
    <subcellularLocation>
        <location evidence="1">Cytoplasm</location>
    </subcellularLocation>
</comment>
<comment type="domain">
    <text evidence="1">IleRS has two distinct active sites: one for aminoacylation and one for editing. The misactivated valine is translocated from the active site to the editing site, which sterically excludes the correctly activated isoleucine. The single editing site contains two valyl binding pockets, one specific for each substrate (Val-AMP or Val-tRNA(Ile)).</text>
</comment>
<comment type="similarity">
    <text evidence="1">Belongs to the class-I aminoacyl-tRNA synthetase family. IleS type 2 subfamily.</text>
</comment>
<reference key="1">
    <citation type="journal article" date="2005" name="Proc. Natl. Acad. Sci. U.S.A.">
        <title>Complete genome sequencing of Anaplasma marginale reveals that the surface is skewed to two superfamilies of outer membrane proteins.</title>
        <authorList>
            <person name="Brayton K.A."/>
            <person name="Kappmeyer L.S."/>
            <person name="Herndon D.R."/>
            <person name="Dark M.J."/>
            <person name="Tibbals D.L."/>
            <person name="Palmer G.H."/>
            <person name="McGuire T.C."/>
            <person name="Knowles D.P. Jr."/>
        </authorList>
    </citation>
    <scope>NUCLEOTIDE SEQUENCE [LARGE SCALE GENOMIC DNA]</scope>
    <source>
        <strain>St. Maries</strain>
    </source>
</reference>
<feature type="chain" id="PRO_0000098514" description="Isoleucine--tRNA ligase">
    <location>
        <begin position="1"/>
        <end position="1101"/>
    </location>
</feature>
<feature type="short sequence motif" description="'HIGH' region">
    <location>
        <begin position="50"/>
        <end position="60"/>
    </location>
</feature>
<feature type="short sequence motif" description="'KMSKS' region">
    <location>
        <begin position="629"/>
        <end position="633"/>
    </location>
</feature>
<feature type="binding site" evidence="1">
    <location>
        <position position="632"/>
    </location>
    <ligand>
        <name>ATP</name>
        <dbReference type="ChEBI" id="CHEBI:30616"/>
    </ligand>
</feature>
<keyword id="KW-0030">Aminoacyl-tRNA synthetase</keyword>
<keyword id="KW-0067">ATP-binding</keyword>
<keyword id="KW-0963">Cytoplasm</keyword>
<keyword id="KW-0436">Ligase</keyword>
<keyword id="KW-0479">Metal-binding</keyword>
<keyword id="KW-0547">Nucleotide-binding</keyword>
<keyword id="KW-0648">Protein biosynthesis</keyword>
<keyword id="KW-0862">Zinc</keyword>
<dbReference type="EC" id="6.1.1.5" evidence="1"/>
<dbReference type="EMBL" id="CP000030">
    <property type="protein sequence ID" value="AAV86661.1"/>
    <property type="molecule type" value="Genomic_DNA"/>
</dbReference>
<dbReference type="RefSeq" id="WP_011114394.1">
    <property type="nucleotide sequence ID" value="NC_004842.2"/>
</dbReference>
<dbReference type="SMR" id="Q5PAL9"/>
<dbReference type="KEGG" id="ama:AM684"/>
<dbReference type="HOGENOM" id="CLU_001493_1_1_5"/>
<dbReference type="GO" id="GO:0005737">
    <property type="term" value="C:cytoplasm"/>
    <property type="evidence" value="ECO:0007669"/>
    <property type="project" value="UniProtKB-SubCell"/>
</dbReference>
<dbReference type="GO" id="GO:0002161">
    <property type="term" value="F:aminoacyl-tRNA deacylase activity"/>
    <property type="evidence" value="ECO:0007669"/>
    <property type="project" value="InterPro"/>
</dbReference>
<dbReference type="GO" id="GO:0005524">
    <property type="term" value="F:ATP binding"/>
    <property type="evidence" value="ECO:0007669"/>
    <property type="project" value="UniProtKB-UniRule"/>
</dbReference>
<dbReference type="GO" id="GO:0004822">
    <property type="term" value="F:isoleucine-tRNA ligase activity"/>
    <property type="evidence" value="ECO:0007669"/>
    <property type="project" value="UniProtKB-UniRule"/>
</dbReference>
<dbReference type="GO" id="GO:0000049">
    <property type="term" value="F:tRNA binding"/>
    <property type="evidence" value="ECO:0007669"/>
    <property type="project" value="InterPro"/>
</dbReference>
<dbReference type="GO" id="GO:0008270">
    <property type="term" value="F:zinc ion binding"/>
    <property type="evidence" value="ECO:0007669"/>
    <property type="project" value="UniProtKB-UniRule"/>
</dbReference>
<dbReference type="GO" id="GO:0006428">
    <property type="term" value="P:isoleucyl-tRNA aminoacylation"/>
    <property type="evidence" value="ECO:0007669"/>
    <property type="project" value="UniProtKB-UniRule"/>
</dbReference>
<dbReference type="CDD" id="cd07961">
    <property type="entry name" value="Anticodon_Ia_Ile_ABEc"/>
    <property type="match status" value="1"/>
</dbReference>
<dbReference type="CDD" id="cd00818">
    <property type="entry name" value="IleRS_core"/>
    <property type="match status" value="1"/>
</dbReference>
<dbReference type="FunFam" id="3.40.50.620:FF:000075">
    <property type="entry name" value="Isoleucine--tRNA ligase"/>
    <property type="match status" value="1"/>
</dbReference>
<dbReference type="FunFam" id="3.40.50.620:FF:000241">
    <property type="entry name" value="Isoleucine--tRNA ligase"/>
    <property type="match status" value="1"/>
</dbReference>
<dbReference type="Gene3D" id="3.40.50.620">
    <property type="entry name" value="HUPs"/>
    <property type="match status" value="2"/>
</dbReference>
<dbReference type="Gene3D" id="1.10.730.10">
    <property type="entry name" value="Isoleucyl-tRNA Synthetase, Domain 1"/>
    <property type="match status" value="1"/>
</dbReference>
<dbReference type="HAMAP" id="MF_02003">
    <property type="entry name" value="Ile_tRNA_synth_type2"/>
    <property type="match status" value="1"/>
</dbReference>
<dbReference type="InterPro" id="IPR001412">
    <property type="entry name" value="aa-tRNA-synth_I_CS"/>
</dbReference>
<dbReference type="InterPro" id="IPR002300">
    <property type="entry name" value="aa-tRNA-synth_Ia"/>
</dbReference>
<dbReference type="InterPro" id="IPR033709">
    <property type="entry name" value="Anticodon_Ile_ABEc"/>
</dbReference>
<dbReference type="InterPro" id="IPR002301">
    <property type="entry name" value="Ile-tRNA-ligase"/>
</dbReference>
<dbReference type="InterPro" id="IPR023586">
    <property type="entry name" value="Ile-tRNA-ligase_type2"/>
</dbReference>
<dbReference type="InterPro" id="IPR013155">
    <property type="entry name" value="M/V/L/I-tRNA-synth_anticd-bd"/>
</dbReference>
<dbReference type="InterPro" id="IPR014729">
    <property type="entry name" value="Rossmann-like_a/b/a_fold"/>
</dbReference>
<dbReference type="InterPro" id="IPR009080">
    <property type="entry name" value="tRNAsynth_Ia_anticodon-bd"/>
</dbReference>
<dbReference type="InterPro" id="IPR009008">
    <property type="entry name" value="Val/Leu/Ile-tRNA-synth_edit"/>
</dbReference>
<dbReference type="NCBIfam" id="TIGR00392">
    <property type="entry name" value="ileS"/>
    <property type="match status" value="1"/>
</dbReference>
<dbReference type="PANTHER" id="PTHR42780:SF1">
    <property type="entry name" value="ISOLEUCINE--TRNA LIGASE, CYTOPLASMIC"/>
    <property type="match status" value="1"/>
</dbReference>
<dbReference type="PANTHER" id="PTHR42780">
    <property type="entry name" value="SOLEUCYL-TRNA SYNTHETASE"/>
    <property type="match status" value="1"/>
</dbReference>
<dbReference type="Pfam" id="PF08264">
    <property type="entry name" value="Anticodon_1"/>
    <property type="match status" value="1"/>
</dbReference>
<dbReference type="Pfam" id="PF19302">
    <property type="entry name" value="DUF5915"/>
    <property type="match status" value="1"/>
</dbReference>
<dbReference type="Pfam" id="PF00133">
    <property type="entry name" value="tRNA-synt_1"/>
    <property type="match status" value="1"/>
</dbReference>
<dbReference type="PRINTS" id="PR00984">
    <property type="entry name" value="TRNASYNTHILE"/>
</dbReference>
<dbReference type="SUPFAM" id="SSF47323">
    <property type="entry name" value="Anticodon-binding domain of a subclass of class I aminoacyl-tRNA synthetases"/>
    <property type="match status" value="1"/>
</dbReference>
<dbReference type="SUPFAM" id="SSF52374">
    <property type="entry name" value="Nucleotidylyl transferase"/>
    <property type="match status" value="1"/>
</dbReference>
<dbReference type="SUPFAM" id="SSF50677">
    <property type="entry name" value="ValRS/IleRS/LeuRS editing domain"/>
    <property type="match status" value="1"/>
</dbReference>
<dbReference type="PROSITE" id="PS00178">
    <property type="entry name" value="AA_TRNA_LIGASE_I"/>
    <property type="match status" value="1"/>
</dbReference>
<gene>
    <name evidence="1" type="primary">ileS</name>
    <name type="ordered locus">AM684</name>
</gene>
<organism>
    <name type="scientific">Anaplasma marginale (strain St. Maries)</name>
    <dbReference type="NCBI Taxonomy" id="234826"/>
    <lineage>
        <taxon>Bacteria</taxon>
        <taxon>Pseudomonadati</taxon>
        <taxon>Pseudomonadota</taxon>
        <taxon>Alphaproteobacteria</taxon>
        <taxon>Rickettsiales</taxon>
        <taxon>Anaplasmataceae</taxon>
        <taxon>Anaplasma</taxon>
    </lineage>
</organism>
<protein>
    <recommendedName>
        <fullName evidence="1">Isoleucine--tRNA ligase</fullName>
        <ecNumber evidence="1">6.1.1.5</ecNumber>
    </recommendedName>
    <alternativeName>
        <fullName evidence="1">Isoleucyl-tRNA synthetase</fullName>
        <shortName evidence="1">IleRS</shortName>
    </alternativeName>
</protein>
<accession>Q5PAL9</accession>
<name>SYI_ANAMM</name>
<proteinExistence type="inferred from homology"/>
<evidence type="ECO:0000255" key="1">
    <source>
        <dbReference type="HAMAP-Rule" id="MF_02003"/>
    </source>
</evidence>
<sequence>MNYYPEVKGNPEFSAIEKEILQYWNSEKIFEESVNTRSRDRSFVFYDGPPFANGLPHYGHLLTGFIKDAVARYKTMRGFRVERKFGWDCHGLPAEMLAEKELGVSGKVSIESFGIDKFNDYCRSSIMRFTQQWREYVERQGRWVDFENGYRTMDKSFMESVMWAFHELWHKGLVYESVKVVPYSWACQTPLSNFETKMDNAYREKVSKSVTVRFKLSEQVGFVPQGVESCSILAWTTTPWTLVSNFALAINTNMDYVGAVVGAEMLIFSAGYLDHFMRYCERHSLECAKVVQIPAKELLAVKYMPPFPYFADSKNAFMVLDAEFVAEGAGTGIVHLAPGFGEDDFLLCKQHGIPNLGEESRGMLSVICPIDDAGRFTAAVGDFAGQHVFDVVDAVIRQLKEKGLWFATEQCTHSYPHCWRTDTPLIYRATSSWYVEVTKLKARMVELNKEVNWVPEHVQSGQFGKWLDGAKDWSVSRHRFWGAPVPVWRSDDPKYPRTDVYGSIKKVLPDVKALEEDFGPVEDLHRPYIDNLVRPNPDDPTGKSMMRRVPDVLDCWFESGSMPYAQMHYPFENKEFFDSHFPADFITEYIAQTRGWFYTLFVLSTGLFDRHPFKNCICHGVVLDIKGQKLSKRLNNYPDPMEMFEKYGADSVRFTMLSHAVSIGGDLLLDQDGDVVRDTLKSVVKPIWNSYSFFTVYANSDQMQGRILESLEGITNIMDQYILYECACMVVKVLEAMESSSAGVRDPYNIRLACAAIVQFSDKLNNWYIRGCRGRFWMRDKTADKSDAYNTLYTVLYHLARTIAPFLPFIAESIWLGLSFQREKSVHLADFPDASSFSAVHQYKKNAEYMQLAMDVCSHVLSLRNAHNIRVRQPLRRMVVYPYNCESLLDMPQQYRDIILNEVNVKSLQIASTIGDMASFELKLNFALLGQRVPEKVKQIITLARAGVWEVQSDGSLLLGAPGCEQCVIQKDEFSLNLKVHSEYACQIISGGVPVGVLHIDHELTRELLLEGIARDVMRLIQQARKDCGLEMLDHAEVIINTDAAEIIEAISIWYDFIKQQTFSHTLEHRPAQAVVEDCSKYTKISGKDFDIFLCKSALCS</sequence>